<name>URE3_PSEPW</name>
<comment type="catalytic activity">
    <reaction evidence="1">
        <text>urea + 2 H2O + H(+) = hydrogencarbonate + 2 NH4(+)</text>
        <dbReference type="Rhea" id="RHEA:20557"/>
        <dbReference type="ChEBI" id="CHEBI:15377"/>
        <dbReference type="ChEBI" id="CHEBI:15378"/>
        <dbReference type="ChEBI" id="CHEBI:16199"/>
        <dbReference type="ChEBI" id="CHEBI:17544"/>
        <dbReference type="ChEBI" id="CHEBI:28938"/>
        <dbReference type="EC" id="3.5.1.5"/>
    </reaction>
</comment>
<comment type="pathway">
    <text evidence="1">Nitrogen metabolism; urea degradation; CO(2) and NH(3) from urea (urease route): step 1/1.</text>
</comment>
<comment type="subunit">
    <text evidence="1">Heterotrimer of UreA (gamma), UreB (beta) and UreC (alpha) subunits. Three heterotrimers associate to form the active enzyme.</text>
</comment>
<comment type="subcellular location">
    <subcellularLocation>
        <location evidence="1">Cytoplasm</location>
    </subcellularLocation>
</comment>
<comment type="similarity">
    <text evidence="1">Belongs to the urease gamma subunit family.</text>
</comment>
<feature type="chain" id="PRO_1000199876" description="Urease subunit gamma">
    <location>
        <begin position="1"/>
        <end position="100"/>
    </location>
</feature>
<accession>B1J813</accession>
<organism>
    <name type="scientific">Pseudomonas putida (strain W619)</name>
    <dbReference type="NCBI Taxonomy" id="390235"/>
    <lineage>
        <taxon>Bacteria</taxon>
        <taxon>Pseudomonadati</taxon>
        <taxon>Pseudomonadota</taxon>
        <taxon>Gammaproteobacteria</taxon>
        <taxon>Pseudomonadales</taxon>
        <taxon>Pseudomonadaceae</taxon>
        <taxon>Pseudomonas</taxon>
    </lineage>
</organism>
<evidence type="ECO:0000255" key="1">
    <source>
        <dbReference type="HAMAP-Rule" id="MF_00739"/>
    </source>
</evidence>
<protein>
    <recommendedName>
        <fullName evidence="1">Urease subunit gamma</fullName>
        <ecNumber evidence="1">3.5.1.5</ecNumber>
    </recommendedName>
    <alternativeName>
        <fullName evidence="1">Urea amidohydrolase subunit gamma</fullName>
    </alternativeName>
</protein>
<gene>
    <name evidence="1" type="primary">ureA</name>
    <name type="ordered locus">PputW619_2415</name>
</gene>
<sequence>MELTPREKDKLLLFTAALLAERRLARGLKLNYPEAVALISAAVLEGARDGRTVAELMSLGREVIGREQVMDGVPEMLHDVQVEATFPDGTKLVTVHDPIV</sequence>
<proteinExistence type="inferred from homology"/>
<reference key="1">
    <citation type="submission" date="2008-02" db="EMBL/GenBank/DDBJ databases">
        <title>Complete sequence of Pseudomonas putida W619.</title>
        <authorList>
            <person name="Copeland A."/>
            <person name="Lucas S."/>
            <person name="Lapidus A."/>
            <person name="Barry K."/>
            <person name="Detter J.C."/>
            <person name="Glavina del Rio T."/>
            <person name="Dalin E."/>
            <person name="Tice H."/>
            <person name="Pitluck S."/>
            <person name="Chain P."/>
            <person name="Malfatti S."/>
            <person name="Shin M."/>
            <person name="Vergez L."/>
            <person name="Schmutz J."/>
            <person name="Larimer F."/>
            <person name="Land M."/>
            <person name="Hauser L."/>
            <person name="Kyrpides N."/>
            <person name="Kim E."/>
            <person name="Taghavi S."/>
            <person name="Vangronsveld D."/>
            <person name="van der Lelie D."/>
            <person name="Richardson P."/>
        </authorList>
    </citation>
    <scope>NUCLEOTIDE SEQUENCE [LARGE SCALE GENOMIC DNA]</scope>
    <source>
        <strain>W619</strain>
    </source>
</reference>
<keyword id="KW-0963">Cytoplasm</keyword>
<keyword id="KW-0378">Hydrolase</keyword>
<dbReference type="EC" id="3.5.1.5" evidence="1"/>
<dbReference type="EMBL" id="CP000949">
    <property type="protein sequence ID" value="ACA72915.1"/>
    <property type="molecule type" value="Genomic_DNA"/>
</dbReference>
<dbReference type="SMR" id="B1J813"/>
<dbReference type="STRING" id="390235.PputW619_2415"/>
<dbReference type="KEGG" id="ppw:PputW619_2415"/>
<dbReference type="eggNOG" id="COG0831">
    <property type="taxonomic scope" value="Bacteria"/>
</dbReference>
<dbReference type="HOGENOM" id="CLU_145825_1_0_6"/>
<dbReference type="OrthoDB" id="9797217at2"/>
<dbReference type="UniPathway" id="UPA00258">
    <property type="reaction ID" value="UER00370"/>
</dbReference>
<dbReference type="GO" id="GO:0005737">
    <property type="term" value="C:cytoplasm"/>
    <property type="evidence" value="ECO:0007669"/>
    <property type="project" value="UniProtKB-SubCell"/>
</dbReference>
<dbReference type="GO" id="GO:0016151">
    <property type="term" value="F:nickel cation binding"/>
    <property type="evidence" value="ECO:0007669"/>
    <property type="project" value="InterPro"/>
</dbReference>
<dbReference type="GO" id="GO:0009039">
    <property type="term" value="F:urease activity"/>
    <property type="evidence" value="ECO:0007669"/>
    <property type="project" value="UniProtKB-UniRule"/>
</dbReference>
<dbReference type="GO" id="GO:0043419">
    <property type="term" value="P:urea catabolic process"/>
    <property type="evidence" value="ECO:0007669"/>
    <property type="project" value="UniProtKB-UniRule"/>
</dbReference>
<dbReference type="CDD" id="cd00390">
    <property type="entry name" value="Urease_gamma"/>
    <property type="match status" value="1"/>
</dbReference>
<dbReference type="Gene3D" id="3.30.280.10">
    <property type="entry name" value="Urease, gamma-like subunit"/>
    <property type="match status" value="1"/>
</dbReference>
<dbReference type="HAMAP" id="MF_00739">
    <property type="entry name" value="Urease_gamma"/>
    <property type="match status" value="1"/>
</dbReference>
<dbReference type="InterPro" id="IPR012010">
    <property type="entry name" value="Urease_gamma"/>
</dbReference>
<dbReference type="InterPro" id="IPR002026">
    <property type="entry name" value="Urease_gamma/gamma-beta_su"/>
</dbReference>
<dbReference type="InterPro" id="IPR036463">
    <property type="entry name" value="Urease_gamma_sf"/>
</dbReference>
<dbReference type="InterPro" id="IPR050069">
    <property type="entry name" value="Urease_subunit"/>
</dbReference>
<dbReference type="NCBIfam" id="NF009712">
    <property type="entry name" value="PRK13241.1"/>
    <property type="match status" value="1"/>
</dbReference>
<dbReference type="NCBIfam" id="TIGR00193">
    <property type="entry name" value="urease_gam"/>
    <property type="match status" value="1"/>
</dbReference>
<dbReference type="PANTHER" id="PTHR33569">
    <property type="entry name" value="UREASE"/>
    <property type="match status" value="1"/>
</dbReference>
<dbReference type="PANTHER" id="PTHR33569:SF1">
    <property type="entry name" value="UREASE"/>
    <property type="match status" value="1"/>
</dbReference>
<dbReference type="Pfam" id="PF00547">
    <property type="entry name" value="Urease_gamma"/>
    <property type="match status" value="1"/>
</dbReference>
<dbReference type="PIRSF" id="PIRSF001223">
    <property type="entry name" value="Urease_gamma"/>
    <property type="match status" value="1"/>
</dbReference>
<dbReference type="SUPFAM" id="SSF54111">
    <property type="entry name" value="Urease, gamma-subunit"/>
    <property type="match status" value="1"/>
</dbReference>